<accession>P48689</accession>
<dbReference type="EC" id="4.1.1.39" evidence="1"/>
<dbReference type="EMBL" id="L13862">
    <property type="protein sequence ID" value="AAA74136.1"/>
    <property type="molecule type" value="Genomic_DNA"/>
</dbReference>
<dbReference type="GO" id="GO:0009507">
    <property type="term" value="C:chloroplast"/>
    <property type="evidence" value="ECO:0007669"/>
    <property type="project" value="UniProtKB-SubCell"/>
</dbReference>
<dbReference type="GO" id="GO:0000287">
    <property type="term" value="F:magnesium ion binding"/>
    <property type="evidence" value="ECO:0007669"/>
    <property type="project" value="UniProtKB-UniRule"/>
</dbReference>
<dbReference type="GO" id="GO:0004497">
    <property type="term" value="F:monooxygenase activity"/>
    <property type="evidence" value="ECO:0007669"/>
    <property type="project" value="UniProtKB-KW"/>
</dbReference>
<dbReference type="GO" id="GO:0016984">
    <property type="term" value="F:ribulose-bisphosphate carboxylase activity"/>
    <property type="evidence" value="ECO:0007669"/>
    <property type="project" value="UniProtKB-UniRule"/>
</dbReference>
<dbReference type="GO" id="GO:0009853">
    <property type="term" value="P:photorespiration"/>
    <property type="evidence" value="ECO:0007669"/>
    <property type="project" value="UniProtKB-KW"/>
</dbReference>
<dbReference type="GO" id="GO:0019253">
    <property type="term" value="P:reductive pentose-phosphate cycle"/>
    <property type="evidence" value="ECO:0007669"/>
    <property type="project" value="UniProtKB-UniRule"/>
</dbReference>
<dbReference type="CDD" id="cd08212">
    <property type="entry name" value="RuBisCO_large_I"/>
    <property type="match status" value="1"/>
</dbReference>
<dbReference type="FunFam" id="3.20.20.110:FF:000001">
    <property type="entry name" value="Ribulose bisphosphate carboxylase large chain"/>
    <property type="match status" value="1"/>
</dbReference>
<dbReference type="FunFam" id="3.30.70.150:FF:000001">
    <property type="entry name" value="Ribulose bisphosphate carboxylase large chain"/>
    <property type="match status" value="1"/>
</dbReference>
<dbReference type="Gene3D" id="3.20.20.110">
    <property type="entry name" value="Ribulose bisphosphate carboxylase, large subunit, C-terminal domain"/>
    <property type="match status" value="1"/>
</dbReference>
<dbReference type="Gene3D" id="3.30.70.150">
    <property type="entry name" value="RuBisCO large subunit, N-terminal domain"/>
    <property type="match status" value="1"/>
</dbReference>
<dbReference type="HAMAP" id="MF_01338">
    <property type="entry name" value="RuBisCO_L_type1"/>
    <property type="match status" value="1"/>
</dbReference>
<dbReference type="InterPro" id="IPR033966">
    <property type="entry name" value="RuBisCO"/>
</dbReference>
<dbReference type="InterPro" id="IPR020878">
    <property type="entry name" value="RuBisCo_large_chain_AS"/>
</dbReference>
<dbReference type="InterPro" id="IPR000685">
    <property type="entry name" value="RuBisCO_lsu_C"/>
</dbReference>
<dbReference type="InterPro" id="IPR036376">
    <property type="entry name" value="RuBisCO_lsu_C_sf"/>
</dbReference>
<dbReference type="InterPro" id="IPR017443">
    <property type="entry name" value="RuBisCO_lsu_fd_N"/>
</dbReference>
<dbReference type="InterPro" id="IPR036422">
    <property type="entry name" value="RuBisCO_lsu_N_sf"/>
</dbReference>
<dbReference type="InterPro" id="IPR020888">
    <property type="entry name" value="RuBisCO_lsuI"/>
</dbReference>
<dbReference type="NCBIfam" id="NF003252">
    <property type="entry name" value="PRK04208.1"/>
    <property type="match status" value="1"/>
</dbReference>
<dbReference type="PANTHER" id="PTHR42704">
    <property type="entry name" value="RIBULOSE BISPHOSPHATE CARBOXYLASE"/>
    <property type="match status" value="1"/>
</dbReference>
<dbReference type="PANTHER" id="PTHR42704:SF15">
    <property type="entry name" value="RIBULOSE BISPHOSPHATE CARBOXYLASE LARGE CHAIN"/>
    <property type="match status" value="1"/>
</dbReference>
<dbReference type="Pfam" id="PF00016">
    <property type="entry name" value="RuBisCO_large"/>
    <property type="match status" value="1"/>
</dbReference>
<dbReference type="Pfam" id="PF02788">
    <property type="entry name" value="RuBisCO_large_N"/>
    <property type="match status" value="1"/>
</dbReference>
<dbReference type="SFLD" id="SFLDG01052">
    <property type="entry name" value="RuBisCO"/>
    <property type="match status" value="1"/>
</dbReference>
<dbReference type="SFLD" id="SFLDS00014">
    <property type="entry name" value="RuBisCO"/>
    <property type="match status" value="1"/>
</dbReference>
<dbReference type="SFLD" id="SFLDG00301">
    <property type="entry name" value="RuBisCO-like_proteins"/>
    <property type="match status" value="1"/>
</dbReference>
<dbReference type="SUPFAM" id="SSF51649">
    <property type="entry name" value="RuBisCo, C-terminal domain"/>
    <property type="match status" value="1"/>
</dbReference>
<dbReference type="SUPFAM" id="SSF54966">
    <property type="entry name" value="RuBisCO, large subunit, small (N-terminal) domain"/>
    <property type="match status" value="1"/>
</dbReference>
<dbReference type="PROSITE" id="PS00157">
    <property type="entry name" value="RUBISCO_LARGE"/>
    <property type="match status" value="1"/>
</dbReference>
<reference key="1">
    <citation type="submission" date="1993-10" db="EMBL/GenBank/DDBJ databases">
        <authorList>
            <person name="Michaels H.J."/>
        </authorList>
    </citation>
    <scope>NUCLEOTIDE SEQUENCE [GENOMIC DNA]</scope>
</reference>
<keyword id="KW-0007">Acetylation</keyword>
<keyword id="KW-0113">Calvin cycle</keyword>
<keyword id="KW-0120">Carbon dioxide fixation</keyword>
<keyword id="KW-0150">Chloroplast</keyword>
<keyword id="KW-1015">Disulfide bond</keyword>
<keyword id="KW-0456">Lyase</keyword>
<keyword id="KW-0460">Magnesium</keyword>
<keyword id="KW-0479">Metal-binding</keyword>
<keyword id="KW-0488">Methylation</keyword>
<keyword id="KW-0503">Monooxygenase</keyword>
<keyword id="KW-0560">Oxidoreductase</keyword>
<keyword id="KW-0601">Photorespiration</keyword>
<keyword id="KW-0602">Photosynthesis</keyword>
<keyword id="KW-0934">Plastid</keyword>
<comment type="function">
    <text evidence="1">RuBisCO catalyzes two reactions: the carboxylation of D-ribulose 1,5-bisphosphate, the primary event in carbon dioxide fixation, as well as the oxidative fragmentation of the pentose substrate in the photorespiration process. Both reactions occur simultaneously and in competition at the same active site.</text>
</comment>
<comment type="catalytic activity">
    <reaction evidence="1">
        <text>2 (2R)-3-phosphoglycerate + 2 H(+) = D-ribulose 1,5-bisphosphate + CO2 + H2O</text>
        <dbReference type="Rhea" id="RHEA:23124"/>
        <dbReference type="ChEBI" id="CHEBI:15377"/>
        <dbReference type="ChEBI" id="CHEBI:15378"/>
        <dbReference type="ChEBI" id="CHEBI:16526"/>
        <dbReference type="ChEBI" id="CHEBI:57870"/>
        <dbReference type="ChEBI" id="CHEBI:58272"/>
        <dbReference type="EC" id="4.1.1.39"/>
    </reaction>
</comment>
<comment type="catalytic activity">
    <reaction evidence="1">
        <text>D-ribulose 1,5-bisphosphate + O2 = 2-phosphoglycolate + (2R)-3-phosphoglycerate + 2 H(+)</text>
        <dbReference type="Rhea" id="RHEA:36631"/>
        <dbReference type="ChEBI" id="CHEBI:15378"/>
        <dbReference type="ChEBI" id="CHEBI:15379"/>
        <dbReference type="ChEBI" id="CHEBI:57870"/>
        <dbReference type="ChEBI" id="CHEBI:58033"/>
        <dbReference type="ChEBI" id="CHEBI:58272"/>
    </reaction>
</comment>
<comment type="cofactor">
    <cofactor evidence="1">
        <name>Mg(2+)</name>
        <dbReference type="ChEBI" id="CHEBI:18420"/>
    </cofactor>
    <text evidence="1">Binds 1 Mg(2+) ion per subunit.</text>
</comment>
<comment type="subunit">
    <text evidence="1">Heterohexadecamer of 8 large chains and 8 small chains; disulfide-linked. The disulfide link is formed within the large subunit homodimers.</text>
</comment>
<comment type="subcellular location">
    <subcellularLocation>
        <location>Plastid</location>
        <location>Chloroplast</location>
    </subcellularLocation>
</comment>
<comment type="PTM">
    <text evidence="1">The disulfide bond which can form in the large chain dimeric partners within the hexadecamer appears to be associated with oxidative stress and protein turnover.</text>
</comment>
<comment type="miscellaneous">
    <text evidence="1">The basic functional RuBisCO is composed of a large chain homodimer in a 'head-to-tail' conformation. In form I RuBisCO this homodimer is arranged in a barrel-like tetramer with the small subunits forming a tetrameric 'cap' on each end of the 'barrel'.</text>
</comment>
<comment type="similarity">
    <text evidence="1">Belongs to the RuBisCO large chain family. Type I subfamily.</text>
</comment>
<proteinExistence type="inferred from homology"/>
<evidence type="ECO:0000255" key="1">
    <source>
        <dbReference type="HAMAP-Rule" id="MF_01338"/>
    </source>
</evidence>
<protein>
    <recommendedName>
        <fullName evidence="1">Ribulose bisphosphate carboxylase large chain</fullName>
        <shortName evidence="1">RuBisCO large subunit</shortName>
        <ecNumber evidence="1">4.1.1.39</ecNumber>
    </recommendedName>
</protein>
<organism>
    <name type="scientific">Carthamus tinctorius</name>
    <name type="common">Safflower</name>
    <dbReference type="NCBI Taxonomy" id="4222"/>
    <lineage>
        <taxon>Eukaryota</taxon>
        <taxon>Viridiplantae</taxon>
        <taxon>Streptophyta</taxon>
        <taxon>Embryophyta</taxon>
        <taxon>Tracheophyta</taxon>
        <taxon>Spermatophyta</taxon>
        <taxon>Magnoliopsida</taxon>
        <taxon>eudicotyledons</taxon>
        <taxon>Gunneridae</taxon>
        <taxon>Pentapetalae</taxon>
        <taxon>asterids</taxon>
        <taxon>campanulids</taxon>
        <taxon>Asterales</taxon>
        <taxon>Asteraceae</taxon>
        <taxon>Carduoideae</taxon>
        <taxon>Cardueae</taxon>
        <taxon>Centaureinae</taxon>
        <taxon>Carthamus</taxon>
    </lineage>
</organism>
<gene>
    <name evidence="1" type="primary">rbcL</name>
</gene>
<feature type="propeptide" id="PRO_0000031161" evidence="1">
    <location>
        <begin position="1"/>
        <end position="2"/>
    </location>
</feature>
<feature type="chain" id="PRO_0000031162" description="Ribulose bisphosphate carboxylase large chain">
    <location>
        <begin position="3"/>
        <end position="477"/>
    </location>
</feature>
<feature type="active site" description="Proton acceptor" evidence="1">
    <location>
        <position position="175"/>
    </location>
</feature>
<feature type="active site" description="Proton acceptor" evidence="1">
    <location>
        <position position="294"/>
    </location>
</feature>
<feature type="binding site" description="in homodimeric partner" evidence="1">
    <location>
        <position position="123"/>
    </location>
    <ligand>
        <name>substrate</name>
    </ligand>
</feature>
<feature type="binding site" evidence="1">
    <location>
        <position position="173"/>
    </location>
    <ligand>
        <name>substrate</name>
    </ligand>
</feature>
<feature type="binding site" evidence="1">
    <location>
        <position position="177"/>
    </location>
    <ligand>
        <name>substrate</name>
    </ligand>
</feature>
<feature type="binding site" description="via carbamate group" evidence="1">
    <location>
        <position position="201"/>
    </location>
    <ligand>
        <name>Mg(2+)</name>
        <dbReference type="ChEBI" id="CHEBI:18420"/>
    </ligand>
</feature>
<feature type="binding site" evidence="1">
    <location>
        <position position="203"/>
    </location>
    <ligand>
        <name>Mg(2+)</name>
        <dbReference type="ChEBI" id="CHEBI:18420"/>
    </ligand>
</feature>
<feature type="binding site" evidence="1">
    <location>
        <position position="204"/>
    </location>
    <ligand>
        <name>Mg(2+)</name>
        <dbReference type="ChEBI" id="CHEBI:18420"/>
    </ligand>
</feature>
<feature type="binding site" evidence="1">
    <location>
        <position position="295"/>
    </location>
    <ligand>
        <name>substrate</name>
    </ligand>
</feature>
<feature type="binding site" evidence="1">
    <location>
        <position position="327"/>
    </location>
    <ligand>
        <name>substrate</name>
    </ligand>
</feature>
<feature type="binding site" evidence="1">
    <location>
        <position position="379"/>
    </location>
    <ligand>
        <name>substrate</name>
    </ligand>
</feature>
<feature type="site" description="Transition state stabilizer" evidence="1">
    <location>
        <position position="334"/>
    </location>
</feature>
<feature type="modified residue" description="N-acetylproline" evidence="1">
    <location>
        <position position="3"/>
    </location>
</feature>
<feature type="modified residue" description="N6,N6,N6-trimethyllysine" evidence="1">
    <location>
        <position position="14"/>
    </location>
</feature>
<feature type="modified residue" description="N6-carboxylysine" evidence="1">
    <location>
        <position position="201"/>
    </location>
</feature>
<feature type="disulfide bond" description="Interchain; in linked form" evidence="1">
    <location>
        <position position="247"/>
    </location>
</feature>
<sequence length="477" mass="53030">MSPQTETKTSVGFKAGVKDYKLTYYTPDYKTKDTDILAAFRVTPQPGVPPEEAGXXVAAESSTGTWTTVWTDGLTSLDRYKGRCYGIEPVPGEETQFIAYVAYPLDLFEEXXVTNMFTSIVGNVFGFKALRALRLEDLRIPTAYVKTFQGPXHGIQVERDKLNKYGRPLLGCTIKPKLGLSAKNYGRAVYECLRGGLDFTKDDENVNSQPFMRWRDRFIFCAEAIYKAQAETGEIKGHYLNATAGTCEDMMKRAVFARELGVPIVMHDYLTGGFTANTTLAHYCRDNGLLLHIHRAMHAVIDRQKNHGMHFRVLAKALRMSGGDHIHSGTVVGKLEGEREITLGFVDLLRDDFIEKDRSRGIYFTQDWVSLPGVLPVASGGIHVWHMPALTEIFGDDSVLQFGGGTLGHPWGNAPGAVANRVALEACVQARNEGRDLATEGNEIIREATKWSPELAAACEVWKEIKFEFEAMDTLDV</sequence>
<geneLocation type="chloroplast"/>
<name>RBL_CARTI</name>